<reference key="1">
    <citation type="journal article" date="1999" name="Nat. Genet.">
        <title>Primary systemic carnitine deficiency is caused by mutations in a gene encoding sodium ion-dependent carnitine transporter.</title>
        <authorList>
            <person name="Nezu J."/>
            <person name="Tamai I."/>
            <person name="Oku A."/>
            <person name="Ohashi R."/>
            <person name="Yabuuchi H."/>
            <person name="Hashimoto N."/>
            <person name="Nikaido H."/>
            <person name="Sai Y."/>
            <person name="Koizumi A."/>
            <person name="Shoji Y."/>
            <person name="Takada G."/>
            <person name="Matsuishi T."/>
            <person name="Yashino M."/>
            <person name="Kato H."/>
            <person name="Ohura T."/>
            <person name="Tsujimoto G."/>
            <person name="Hayakawa J."/>
            <person name="Shimane M."/>
            <person name="Tsuji A."/>
        </authorList>
    </citation>
    <scope>NUCLEOTIDE SEQUENCE [MRNA]</scope>
    <source>
        <strain>C57BL/6J</strain>
        <tissue>Kidney</tissue>
    </source>
</reference>
<reference key="2">
    <citation type="journal article" date="1998" name="Biochem. Biophys. Res. Commun.">
        <title>A missense mutation of mouse OCTN2, a sodium-dependent carnitine cotransporter, in the juvenile visceral steatosis mouse.</title>
        <authorList>
            <person name="Lu K."/>
            <person name="Nishimori H."/>
            <person name="Nakamura Y."/>
            <person name="Shima K."/>
            <person name="Kuwajima M."/>
        </authorList>
    </citation>
    <scope>NUCLEOTIDE SEQUENCE [MRNA]</scope>
    <scope>VARIANT JVS ARG-352</scope>
    <source>
        <strain>C3H/HeJ</strain>
    </source>
</reference>
<reference key="3">
    <citation type="journal article" date="1999" name="J. Pharmacol. Exp. Ther.">
        <title>Functional characteristics and tissue distribution pattern of organic cation transporter 2 (OCTN2), an organic cation/carnitine transporter.</title>
        <authorList>
            <person name="Wu X."/>
            <person name="Huang W."/>
            <person name="Prasad P.D."/>
            <person name="Seth P."/>
            <person name="Rajan D.P."/>
            <person name="Leibach F.H."/>
            <person name="Chen J."/>
            <person name="Conway S.J."/>
            <person name="Ganapathy V."/>
        </authorList>
    </citation>
    <scope>NUCLEOTIDE SEQUENCE [MRNA]</scope>
    <scope>FUNCTION</scope>
    <scope>TRANSPORTER ACTIVITY</scope>
</reference>
<reference key="4">
    <citation type="journal article" date="2004" name="Genome Res.">
        <title>The status, quality, and expansion of the NIH full-length cDNA project: the Mammalian Gene Collection (MGC).</title>
        <authorList>
            <consortium name="The MGC Project Team"/>
        </authorList>
    </citation>
    <scope>NUCLEOTIDE SEQUENCE [LARGE SCALE MRNA]</scope>
    <source>
        <strain>FVB/N</strain>
        <tissue>Colon</tissue>
    </source>
</reference>
<reference key="5">
    <citation type="journal article" date="2000" name="J. Biol. Chem.">
        <title>Molecular and functional characterization of organic cation/carnitine transporter family in mice.</title>
        <authorList>
            <person name="Tamai I."/>
            <person name="Ohashi R."/>
            <person name="Nezu J."/>
            <person name="Sai Y."/>
            <person name="Kobayashi D."/>
            <person name="Oku A."/>
            <person name="Shimane M."/>
            <person name="Tsuji A."/>
        </authorList>
    </citation>
    <scope>TISSUE SPECIFICITY</scope>
</reference>
<reference key="6">
    <citation type="journal article" date="2005" name="Mol. Pharmacol.">
        <title>PDZK1 directly regulates the function of organic cation/carnitine transporter OCTN2.</title>
        <authorList>
            <person name="Kato Y."/>
            <person name="Sai Y."/>
            <person name="Yoshida K."/>
            <person name="Watanabe C."/>
            <person name="Hirata T."/>
            <person name="Tsuji A."/>
        </authorList>
    </citation>
    <scope>SUBCELLULAR LOCATION</scope>
    <scope>INTERACTION WITH PDZK1</scope>
</reference>
<reference key="7">
    <citation type="journal article" date="2009" name="Immunity">
        <title>The phagosomal proteome in interferon-gamma-activated macrophages.</title>
        <authorList>
            <person name="Trost M."/>
            <person name="English L."/>
            <person name="Lemieux S."/>
            <person name="Courcelles M."/>
            <person name="Desjardins M."/>
            <person name="Thibault P."/>
        </authorList>
    </citation>
    <scope>PHOSPHORYLATION [LARGE SCALE ANALYSIS] AT THR-550</scope>
    <scope>IDENTIFICATION BY MASS SPECTROMETRY [LARGE SCALE ANALYSIS]</scope>
</reference>
<reference key="8">
    <citation type="journal article" date="2010" name="Cell">
        <title>A tissue-specific atlas of mouse protein phosphorylation and expression.</title>
        <authorList>
            <person name="Huttlin E.L."/>
            <person name="Jedrychowski M.P."/>
            <person name="Elias J.E."/>
            <person name="Goswami T."/>
            <person name="Rad R."/>
            <person name="Beausoleil S.A."/>
            <person name="Villen J."/>
            <person name="Haas W."/>
            <person name="Sowa M.E."/>
            <person name="Gygi S.P."/>
        </authorList>
    </citation>
    <scope>PHOSPHORYLATION [LARGE SCALE ANALYSIS] AT SER-548</scope>
    <scope>IDENTIFICATION BY MASS SPECTROMETRY [LARGE SCALE ANALYSIS]</scope>
    <source>
        <tissue>Brain</tissue>
        <tissue>Brown adipose tissue</tissue>
        <tissue>Kidney</tissue>
    </source>
</reference>
<reference key="9">
    <citation type="journal article" date="2011" name="Inflamm. Bowel Dis.">
        <title>Cytokine regulation of OCTN2 expression and activity in small and large intestine.</title>
        <authorList>
            <person name="Fujiya M."/>
            <person name="Inaba Y."/>
            <person name="Musch M.W."/>
            <person name="Hu S."/>
            <person name="Kohgo Y."/>
            <person name="Chang E.B."/>
        </authorList>
    </citation>
    <scope>FUNCTION</scope>
    <scope>TISSUE SPECIFICITY</scope>
    <scope>SUBCELLULAR LOCATION</scope>
    <scope>INDUCTION BY CYTOKINES</scope>
    <scope>TRANSPORTER ACTIVITY</scope>
</reference>
<name>S22A5_MOUSE</name>
<feature type="chain" id="PRO_0000220501" description="Organic cation/carnitine transporter 2">
    <location>
        <begin position="1"/>
        <end position="557"/>
    </location>
</feature>
<feature type="topological domain" description="Cytoplasmic" evidence="3">
    <location>
        <begin position="1"/>
        <end position="20"/>
    </location>
</feature>
<feature type="transmembrane region" description="Helical; Name=1" evidence="3">
    <location>
        <begin position="21"/>
        <end position="41"/>
    </location>
</feature>
<feature type="topological domain" description="Extracellular" evidence="3">
    <location>
        <begin position="42"/>
        <end position="142"/>
    </location>
</feature>
<feature type="transmembrane region" description="Helical; Name=2" evidence="3">
    <location>
        <begin position="143"/>
        <end position="163"/>
    </location>
</feature>
<feature type="topological domain" description="Cytoplasmic" evidence="3">
    <location>
        <begin position="164"/>
        <end position="172"/>
    </location>
</feature>
<feature type="transmembrane region" description="Helical; Name=3" evidence="3">
    <location>
        <begin position="173"/>
        <end position="193"/>
    </location>
</feature>
<feature type="topological domain" description="Extracellular" evidence="3">
    <location>
        <begin position="194"/>
        <end position="197"/>
    </location>
</feature>
<feature type="transmembrane region" description="Helical; Name=4" evidence="3">
    <location>
        <begin position="198"/>
        <end position="218"/>
    </location>
</feature>
<feature type="topological domain" description="Cytoplasmic" evidence="3">
    <location>
        <begin position="219"/>
        <end position="232"/>
    </location>
</feature>
<feature type="transmembrane region" description="Helical; Name=5" evidence="3">
    <location>
        <begin position="233"/>
        <end position="253"/>
    </location>
</feature>
<feature type="topological domain" description="Extracellular" evidence="3">
    <location>
        <begin position="254"/>
        <end position="257"/>
    </location>
</feature>
<feature type="transmembrane region" description="Helical; Name=6" evidence="3">
    <location>
        <begin position="258"/>
        <end position="278"/>
    </location>
</feature>
<feature type="topological domain" description="Cytoplasmic" evidence="3">
    <location>
        <begin position="279"/>
        <end position="341"/>
    </location>
</feature>
<feature type="transmembrane region" description="Helical; Name=7" evidence="3">
    <location>
        <begin position="342"/>
        <end position="362"/>
    </location>
</feature>
<feature type="topological domain" description="Extracellular" evidence="3">
    <location>
        <begin position="363"/>
        <end position="373"/>
    </location>
</feature>
<feature type="transmembrane region" description="Helical; Name=8" evidence="3">
    <location>
        <begin position="374"/>
        <end position="394"/>
    </location>
</feature>
<feature type="topological domain" description="Cytoplasmic" evidence="3">
    <location>
        <begin position="395"/>
        <end position="406"/>
    </location>
</feature>
<feature type="transmembrane region" description="Helical; Name=9" evidence="3">
    <location>
        <begin position="407"/>
        <end position="427"/>
    </location>
</feature>
<feature type="topological domain" description="Extracellular" evidence="3">
    <location>
        <begin position="428"/>
        <end position="430"/>
    </location>
</feature>
<feature type="transmembrane region" description="Helical; Name=10" evidence="3">
    <location>
        <begin position="431"/>
        <end position="451"/>
    </location>
</feature>
<feature type="topological domain" description="Cytoplasmic" evidence="3">
    <location>
        <begin position="452"/>
        <end position="462"/>
    </location>
</feature>
<feature type="transmembrane region" description="Helical; Name=11" evidence="3">
    <location>
        <begin position="463"/>
        <end position="483"/>
    </location>
</feature>
<feature type="topological domain" description="Extracellular" evidence="3">
    <location>
        <begin position="484"/>
        <end position="488"/>
    </location>
</feature>
<feature type="transmembrane region" description="Helical; Name=12" evidence="3">
    <location>
        <begin position="489"/>
        <end position="509"/>
    </location>
</feature>
<feature type="topological domain" description="Cytoplasmic" evidence="3">
    <location>
        <begin position="510"/>
        <end position="557"/>
    </location>
</feature>
<feature type="binding site" evidence="3">
    <location>
        <begin position="218"/>
        <end position="225"/>
    </location>
    <ligand>
        <name>ATP</name>
        <dbReference type="ChEBI" id="CHEBI:30616"/>
    </ligand>
</feature>
<feature type="modified residue" description="Phosphotyrosine" evidence="2">
    <location>
        <position position="486"/>
    </location>
</feature>
<feature type="modified residue" description="Phosphoserine" evidence="14">
    <location>
        <position position="548"/>
    </location>
</feature>
<feature type="modified residue" description="Phosphothreonine" evidence="13">
    <location>
        <position position="550"/>
    </location>
</feature>
<feature type="glycosylation site" description="N-linked (GlcNAc...) asparagine" evidence="3">
    <location>
        <position position="57"/>
    </location>
</feature>
<feature type="glycosylation site" description="N-linked (GlcNAc...) asparagine" evidence="3">
    <location>
        <position position="64"/>
    </location>
</feature>
<feature type="glycosylation site" description="N-linked (GlcNAc...) asparagine" evidence="3">
    <location>
        <position position="91"/>
    </location>
</feature>
<feature type="sequence variant" description="In JVS." evidence="8">
    <original>L</original>
    <variation>R</variation>
    <location>
        <position position="352"/>
    </location>
</feature>
<protein>
    <recommendedName>
        <fullName>Organic cation/carnitine transporter 2</fullName>
    </recommendedName>
    <alternativeName>
        <fullName>High-affinity sodium-dependent carnitine cotransporter</fullName>
    </alternativeName>
    <alternativeName>
        <fullName>Solute carrier family 22 member 5</fullName>
    </alternativeName>
</protein>
<gene>
    <name evidence="12" type="primary">Slc22a5</name>
    <name evidence="9 10" type="synonym">Octn2</name>
</gene>
<organism>
    <name type="scientific">Mus musculus</name>
    <name type="common">Mouse</name>
    <dbReference type="NCBI Taxonomy" id="10090"/>
    <lineage>
        <taxon>Eukaryota</taxon>
        <taxon>Metazoa</taxon>
        <taxon>Chordata</taxon>
        <taxon>Craniata</taxon>
        <taxon>Vertebrata</taxon>
        <taxon>Euteleostomi</taxon>
        <taxon>Mammalia</taxon>
        <taxon>Eutheria</taxon>
        <taxon>Euarchontoglires</taxon>
        <taxon>Glires</taxon>
        <taxon>Rodentia</taxon>
        <taxon>Myomorpha</taxon>
        <taxon>Muroidea</taxon>
        <taxon>Muridae</taxon>
        <taxon>Murinae</taxon>
        <taxon>Mus</taxon>
        <taxon>Mus</taxon>
    </lineage>
</organism>
<sequence length="557" mass="62780">MRDYDEVTAFLGEWGPFQRLIFFLLSASIIPNGFNGMSIVFLAGTPEHRCLVPHTVNLSSAWRNHSIPLETKDGRQVPQKCRRYRLATIANFSELGLEPGRDVDLEQLEQESCLDGWEYDKDVFLSTIVTEWDLVCKDDWKAPLTTSLFFVGVLMGSFISGQLSDRFGRKNVLFLTMGMQTGFSFLQVFSVNFEMFTVLFVLVGMGQISNYVAAFVLGTEILSKSIRIIFATLGVCIFYAFGFMVLPLFAYFIRDWRMLLLALTVPGVLCGALWWFIPESPRWLISQGRIKEAEVIIRKAAKINGIVAPSTIFDPSELQDLNSTKPQLHHIYDLIRTRNIRVITIMSIILWLTISVGYFGLSLDTPNLHGDIYVNCFLLAAVEVPAYVLAWLLLQYLPRRYSISAALFLGGSVLLFMQLVPSELFYLSTALVMVGKFGITSAYSMVYVYTAELYPTVVRNMGVGVSSTASRLGSILSPYFVYLGAYDRFLPYILMGSLTILTAILTLFFPESFGVPLPDTIDQMLRVKGIKQWQIQSQTRMQKDGEESPTVLKSTAF</sequence>
<comment type="function">
    <text evidence="1 4 7">Sodium-ion dependent, high affinity carnitine transporter. Involved in the active cellular uptake of carnitine. Transports one sodium ion with one molecule of carnitine (PubMed:10454528, PubMed:20722056). Also transports organic cations such as tetraethylammonium (TEA) without the involvement of sodium. Also relative uptake activity ratio of carnitine to TEA is 11.3 (PubMed:10454528). May also contribute to regulate the transport of organic compounds in testis across the blood-testis-barrier (By similarity).</text>
</comment>
<comment type="catalytic activity">
    <reaction evidence="4 7">
        <text>(R)-carnitine(out) + Na(+)(out) = (R)-carnitine(in) + Na(+)(in)</text>
        <dbReference type="Rhea" id="RHEA:72091"/>
        <dbReference type="ChEBI" id="CHEBI:16347"/>
        <dbReference type="ChEBI" id="CHEBI:29101"/>
    </reaction>
</comment>
<comment type="catalytic activity">
    <reaction evidence="2">
        <text>glycine betaine(out) + Na(+)(out) = glycine betaine(in) + Na(+)(in)</text>
        <dbReference type="Rhea" id="RHEA:72115"/>
        <dbReference type="ChEBI" id="CHEBI:17750"/>
        <dbReference type="ChEBI" id="CHEBI:29101"/>
    </reaction>
</comment>
<comment type="catalytic activity">
    <reaction evidence="2">
        <text>glycine betaine(out) + (R)-carnitine(in) = glycine betaine(in) + (R)-carnitine(out)</text>
        <dbReference type="Rhea" id="RHEA:72119"/>
        <dbReference type="ChEBI" id="CHEBI:16347"/>
        <dbReference type="ChEBI" id="CHEBI:17750"/>
    </reaction>
</comment>
<comment type="catalytic activity">
    <reaction evidence="2">
        <text>O-butanoyl-(R)-carnitine(out) + Na(+)(out) = O-butanoyl-(R)-carnitine(in) + Na(+)(in)</text>
        <dbReference type="Rhea" id="RHEA:72123"/>
        <dbReference type="ChEBI" id="CHEBI:21949"/>
        <dbReference type="ChEBI" id="CHEBI:29101"/>
    </reaction>
</comment>
<comment type="catalytic activity">
    <reaction evidence="2">
        <text>O-acetyl-(R)-carnitine(out) + Na(+)(out) = O-acetyl-(R)-carnitine(in) + Na(+)(in)</text>
        <dbReference type="Rhea" id="RHEA:72099"/>
        <dbReference type="ChEBI" id="CHEBI:29101"/>
        <dbReference type="ChEBI" id="CHEBI:57589"/>
    </reaction>
</comment>
<comment type="catalytic activity">
    <reaction evidence="2">
        <text>O-propanoyl-(R)-carnitine(out) + Na(+)(out) = O-propanoyl-(R)-carnitine(in) + Na(+)(in)</text>
        <dbReference type="Rhea" id="RHEA:72103"/>
        <dbReference type="ChEBI" id="CHEBI:29101"/>
        <dbReference type="ChEBI" id="CHEBI:53210"/>
    </reaction>
</comment>
<comment type="catalytic activity">
    <reaction evidence="2">
        <text>(S)-carnitine(out) + Na(+)(out) = (S)-carnitine(in) + Na(+)(in)</text>
        <dbReference type="Rhea" id="RHEA:72095"/>
        <dbReference type="ChEBI" id="CHEBI:11060"/>
        <dbReference type="ChEBI" id="CHEBI:29101"/>
    </reaction>
</comment>
<comment type="catalytic activity">
    <reaction evidence="2">
        <text>an O-acyl-(R)-carnitine(out) + Na(+)(out) = an O-acyl-(R)-carnitine(in) + Na(+)(in)</text>
        <dbReference type="Rhea" id="RHEA:72107"/>
        <dbReference type="ChEBI" id="CHEBI:29101"/>
        <dbReference type="ChEBI" id="CHEBI:75659"/>
    </reaction>
</comment>
<comment type="catalytic activity">
    <reaction evidence="2">
        <text>L-glutamyl-L-arginyl-glycyl-L-methionyl-L-threonine(out) + Na(+)(out) = L-glutamyl-L-arginyl-glycyl-L-methionyl-L-threonine(in) + Na(+)(in)</text>
        <dbReference type="Rhea" id="RHEA:72111"/>
        <dbReference type="ChEBI" id="CHEBI:29101"/>
        <dbReference type="ChEBI" id="CHEBI:191852"/>
    </reaction>
</comment>
<comment type="catalytic activity">
    <reaction evidence="2">
        <text>N,N-dimethylglycine(out) + Na(+)(out) = N,N-dimethylglycine(in) + Na(+)(in)</text>
        <dbReference type="Rhea" id="RHEA:76591"/>
        <dbReference type="ChEBI" id="CHEBI:29101"/>
        <dbReference type="ChEBI" id="CHEBI:58251"/>
    </reaction>
</comment>
<comment type="activity regulation">
    <text evidence="2">Inhibited by emetine, quinidine and verapamil. The IC(50) of emetine is 4.2 uM. Not inhibited by valproic acid. Transport of (R)-carnitine is stimulated by cholesterol in the plasma membrane.</text>
</comment>
<comment type="subunit">
    <text evidence="6">Interacts with PDZK1.</text>
</comment>
<comment type="subcellular location">
    <subcellularLocation>
        <location evidence="6 7">Apical cell membrane</location>
        <topology evidence="6">Multi-pass membrane protein</topology>
    </subcellularLocation>
    <subcellularLocation>
        <location evidence="2">Basal cell membrane</location>
        <topology evidence="3">Multi-pass membrane protein</topology>
    </subcellularLocation>
    <subcellularLocation>
        <location evidence="2">Cell membrane</location>
        <topology evidence="2">Multi-pass membrane protein</topology>
    </subcellularLocation>
    <text evidence="6 7">Colocalizes with PDZK1 on apical membranes of kidney proximal tubules (PubMed:15523054). In intestinal cells, apical expression is induced by TNF (PubMed:20722056).</text>
</comment>
<comment type="tissue specificity">
    <text evidence="5 7">Widely expressed. Expressed in kidney, liver and testis (PubMed:11010964). Expressed at the brush border of the small, large intestine and colon (at protein level) (PubMed:11010964, PubMed:20722056).</text>
</comment>
<comment type="induction">
    <text evidence="7">Intestinal expression is induced by IFNG.</text>
</comment>
<comment type="disease">
    <text>Defects in Slc22a5 are the cause of the juvenile visceral steatosis (JVS) phenotype. JVS is an autosomal recessive animal model of systemic carnitine deficiency.</text>
</comment>
<comment type="similarity">
    <text evidence="11">Belongs to the major facilitator (TC 2.A.1) superfamily. Organic cation transporter (TC 2.A.1.19) family.</text>
</comment>
<accession>Q9Z0E8</accession>
<proteinExistence type="evidence at protein level"/>
<dbReference type="EMBL" id="AB015800">
    <property type="protein sequence ID" value="BAA36590.1"/>
    <property type="molecule type" value="mRNA"/>
</dbReference>
<dbReference type="EMBL" id="AF111425">
    <property type="protein sequence ID" value="AAC99787.1"/>
    <property type="molecule type" value="mRNA"/>
</dbReference>
<dbReference type="EMBL" id="AF110417">
    <property type="protein sequence ID" value="AAD54060.1"/>
    <property type="molecule type" value="mRNA"/>
</dbReference>
<dbReference type="EMBL" id="BC031118">
    <property type="protein sequence ID" value="AAH31118.1"/>
    <property type="molecule type" value="mRNA"/>
</dbReference>
<dbReference type="CCDS" id="CCDS24687.1"/>
<dbReference type="RefSeq" id="NP_035526.1">
    <property type="nucleotide sequence ID" value="NM_011396.4"/>
</dbReference>
<dbReference type="SMR" id="Q9Z0E8"/>
<dbReference type="FunCoup" id="Q9Z0E8">
    <property type="interactions" value="214"/>
</dbReference>
<dbReference type="STRING" id="10090.ENSMUSP00000019044"/>
<dbReference type="ChEMBL" id="CHEMBL2073665"/>
<dbReference type="GlyConnect" id="2733">
    <property type="glycosylation" value="2 N-Linked glycans (1 site)"/>
</dbReference>
<dbReference type="GlyCosmos" id="Q9Z0E8">
    <property type="glycosylation" value="3 sites, 2 glycans"/>
</dbReference>
<dbReference type="GlyGen" id="Q9Z0E8">
    <property type="glycosylation" value="3 sites, 4 N-linked glycans (2 sites)"/>
</dbReference>
<dbReference type="iPTMnet" id="Q9Z0E8"/>
<dbReference type="PhosphoSitePlus" id="Q9Z0E8"/>
<dbReference type="jPOST" id="Q9Z0E8"/>
<dbReference type="PaxDb" id="10090-ENSMUSP00000019044"/>
<dbReference type="ProteomicsDB" id="260885"/>
<dbReference type="DNASU" id="20520"/>
<dbReference type="Ensembl" id="ENSMUST00000019044.8">
    <property type="protein sequence ID" value="ENSMUSP00000019044.8"/>
    <property type="gene ID" value="ENSMUSG00000018900.8"/>
</dbReference>
<dbReference type="GeneID" id="20520"/>
<dbReference type="KEGG" id="mmu:20520"/>
<dbReference type="UCSC" id="uc007ixc.2">
    <property type="organism name" value="mouse"/>
</dbReference>
<dbReference type="AGR" id="MGI:1329012"/>
<dbReference type="CTD" id="6584"/>
<dbReference type="MGI" id="MGI:1329012">
    <property type="gene designation" value="Slc22a5"/>
</dbReference>
<dbReference type="VEuPathDB" id="HostDB:ENSMUSG00000018900"/>
<dbReference type="eggNOG" id="KOG0255">
    <property type="taxonomic scope" value="Eukaryota"/>
</dbReference>
<dbReference type="GeneTree" id="ENSGT00940000154155"/>
<dbReference type="HOGENOM" id="CLU_001265_33_4_1"/>
<dbReference type="InParanoid" id="Q9Z0E8"/>
<dbReference type="OMA" id="RIIYCTL"/>
<dbReference type="OrthoDB" id="3936150at2759"/>
<dbReference type="PhylomeDB" id="Q9Z0E8"/>
<dbReference type="TreeFam" id="TF315847"/>
<dbReference type="Reactome" id="R-MMU-200425">
    <property type="pathway name" value="Carnitine shuttle"/>
</dbReference>
<dbReference type="Reactome" id="R-MMU-549127">
    <property type="pathway name" value="Organic cation transport"/>
</dbReference>
<dbReference type="BioGRID-ORCS" id="20520">
    <property type="hits" value="3 hits in 80 CRISPR screens"/>
</dbReference>
<dbReference type="ChiTaRS" id="Slc22a5">
    <property type="organism name" value="mouse"/>
</dbReference>
<dbReference type="PRO" id="PR:Q9Z0E8"/>
<dbReference type="Proteomes" id="UP000000589">
    <property type="component" value="Chromosome 11"/>
</dbReference>
<dbReference type="RNAct" id="Q9Z0E8">
    <property type="molecule type" value="protein"/>
</dbReference>
<dbReference type="Bgee" id="ENSMUSG00000018900">
    <property type="expression patterns" value="Expressed in right kidney and 128 other cell types or tissues"/>
</dbReference>
<dbReference type="ExpressionAtlas" id="Q9Z0E8">
    <property type="expression patterns" value="baseline and differential"/>
</dbReference>
<dbReference type="GO" id="GO:0016324">
    <property type="term" value="C:apical plasma membrane"/>
    <property type="evidence" value="ECO:0000314"/>
    <property type="project" value="UniProtKB"/>
</dbReference>
<dbReference type="GO" id="GO:0009925">
    <property type="term" value="C:basal plasma membrane"/>
    <property type="evidence" value="ECO:0000250"/>
    <property type="project" value="UniProtKB"/>
</dbReference>
<dbReference type="GO" id="GO:0016323">
    <property type="term" value="C:basolateral plasma membrane"/>
    <property type="evidence" value="ECO:0007669"/>
    <property type="project" value="Ensembl"/>
</dbReference>
<dbReference type="GO" id="GO:0031526">
    <property type="term" value="C:brush border membrane"/>
    <property type="evidence" value="ECO:0000314"/>
    <property type="project" value="BHF-UCL"/>
</dbReference>
<dbReference type="GO" id="GO:0005829">
    <property type="term" value="C:cytosol"/>
    <property type="evidence" value="ECO:0007669"/>
    <property type="project" value="Ensembl"/>
</dbReference>
<dbReference type="GO" id="GO:0016020">
    <property type="term" value="C:membrane"/>
    <property type="evidence" value="ECO:0000305"/>
    <property type="project" value="MGI"/>
</dbReference>
<dbReference type="GO" id="GO:0005886">
    <property type="term" value="C:plasma membrane"/>
    <property type="evidence" value="ECO:0000315"/>
    <property type="project" value="MGI"/>
</dbReference>
<dbReference type="GO" id="GO:1901235">
    <property type="term" value="F:(R)-carnitine transmembrane transporter activity"/>
    <property type="evidence" value="ECO:0000314"/>
    <property type="project" value="UniProtKB"/>
</dbReference>
<dbReference type="GO" id="GO:0015199">
    <property type="term" value="F:amino-acid betaine transmembrane transporter activity"/>
    <property type="evidence" value="ECO:0000250"/>
    <property type="project" value="UniProtKB"/>
</dbReference>
<dbReference type="GO" id="GO:0005524">
    <property type="term" value="F:ATP binding"/>
    <property type="evidence" value="ECO:0007669"/>
    <property type="project" value="UniProtKB-KW"/>
</dbReference>
<dbReference type="GO" id="GO:0015226">
    <property type="term" value="F:carnitine transmembrane transporter activity"/>
    <property type="evidence" value="ECO:0000314"/>
    <property type="project" value="UniProtKB"/>
</dbReference>
<dbReference type="GO" id="GO:0015651">
    <property type="term" value="F:quaternary ammonium group transmembrane transporter activity"/>
    <property type="evidence" value="ECO:0000314"/>
    <property type="project" value="MGI"/>
</dbReference>
<dbReference type="GO" id="GO:0015081">
    <property type="term" value="F:sodium ion transmembrane transporter activity"/>
    <property type="evidence" value="ECO:0000314"/>
    <property type="project" value="MGI"/>
</dbReference>
<dbReference type="GO" id="GO:0015293">
    <property type="term" value="F:symporter activity"/>
    <property type="evidence" value="ECO:0007669"/>
    <property type="project" value="UniProtKB-KW"/>
</dbReference>
<dbReference type="GO" id="GO:1902270">
    <property type="term" value="P:(R)-carnitine transmembrane transport"/>
    <property type="evidence" value="ECO:0000314"/>
    <property type="project" value="UniProtKB"/>
</dbReference>
<dbReference type="GO" id="GO:1900749">
    <property type="term" value="P:(R)-carnitine transport"/>
    <property type="evidence" value="ECO:0000314"/>
    <property type="project" value="UniProtKB"/>
</dbReference>
<dbReference type="GO" id="GO:0007512">
    <property type="term" value="P:adult heart development"/>
    <property type="evidence" value="ECO:0000315"/>
    <property type="project" value="MGI"/>
</dbReference>
<dbReference type="GO" id="GO:0009437">
    <property type="term" value="P:carnitine metabolic process"/>
    <property type="evidence" value="ECO:0000315"/>
    <property type="project" value="MGI"/>
</dbReference>
<dbReference type="GO" id="GO:1902603">
    <property type="term" value="P:carnitine transmembrane transport"/>
    <property type="evidence" value="ECO:0000315"/>
    <property type="project" value="MGI"/>
</dbReference>
<dbReference type="GO" id="GO:0015879">
    <property type="term" value="P:carnitine transport"/>
    <property type="evidence" value="ECO:0000314"/>
    <property type="project" value="MGI"/>
</dbReference>
<dbReference type="GO" id="GO:0051649">
    <property type="term" value="P:establishment of localization in cell"/>
    <property type="evidence" value="ECO:0000315"/>
    <property type="project" value="MGI"/>
</dbReference>
<dbReference type="GO" id="GO:0007626">
    <property type="term" value="P:locomotory behavior"/>
    <property type="evidence" value="ECO:0000315"/>
    <property type="project" value="MGI"/>
</dbReference>
<dbReference type="GO" id="GO:0007005">
    <property type="term" value="P:mitochondrion organization"/>
    <property type="evidence" value="ECO:0000315"/>
    <property type="project" value="MGI"/>
</dbReference>
<dbReference type="GO" id="GO:0015697">
    <property type="term" value="P:quaternary ammonium group transport"/>
    <property type="evidence" value="ECO:0000314"/>
    <property type="project" value="MGI"/>
</dbReference>
<dbReference type="GO" id="GO:0048608">
    <property type="term" value="P:reproductive structure development"/>
    <property type="evidence" value="ECO:0000315"/>
    <property type="project" value="MGI"/>
</dbReference>
<dbReference type="GO" id="GO:0034612">
    <property type="term" value="P:response to tumor necrosis factor"/>
    <property type="evidence" value="ECO:0000314"/>
    <property type="project" value="UniProtKB"/>
</dbReference>
<dbReference type="GO" id="GO:0034341">
    <property type="term" value="P:response to type II interferon"/>
    <property type="evidence" value="ECO:0000314"/>
    <property type="project" value="UniProtKB"/>
</dbReference>
<dbReference type="GO" id="GO:0150104">
    <property type="term" value="P:transport across blood-brain barrier"/>
    <property type="evidence" value="ECO:0000315"/>
    <property type="project" value="ARUK-UCL"/>
</dbReference>
<dbReference type="CDD" id="cd17376">
    <property type="entry name" value="MFS_SLC22A4_5_OCTN1_2"/>
    <property type="match status" value="1"/>
</dbReference>
<dbReference type="FunFam" id="1.20.1250.20:FF:000070">
    <property type="entry name" value="Solute carrier family 22 member 5"/>
    <property type="match status" value="1"/>
</dbReference>
<dbReference type="Gene3D" id="1.20.1250.20">
    <property type="entry name" value="MFS general substrate transporter like domains"/>
    <property type="match status" value="1"/>
</dbReference>
<dbReference type="InterPro" id="IPR020846">
    <property type="entry name" value="MFS_dom"/>
</dbReference>
<dbReference type="InterPro" id="IPR005828">
    <property type="entry name" value="MFS_sugar_transport-like"/>
</dbReference>
<dbReference type="InterPro" id="IPR036259">
    <property type="entry name" value="MFS_trans_sf"/>
</dbReference>
<dbReference type="InterPro" id="IPR004749">
    <property type="entry name" value="Orgcat_transp/SVOP"/>
</dbReference>
<dbReference type="InterPro" id="IPR045915">
    <property type="entry name" value="S22A4/5"/>
</dbReference>
<dbReference type="InterPro" id="IPR005829">
    <property type="entry name" value="Sugar_transporter_CS"/>
</dbReference>
<dbReference type="NCBIfam" id="TIGR00898">
    <property type="entry name" value="2A0119"/>
    <property type="match status" value="1"/>
</dbReference>
<dbReference type="PANTHER" id="PTHR24064">
    <property type="entry name" value="SOLUTE CARRIER FAMILY 22 MEMBER"/>
    <property type="match status" value="1"/>
</dbReference>
<dbReference type="Pfam" id="PF00083">
    <property type="entry name" value="Sugar_tr"/>
    <property type="match status" value="1"/>
</dbReference>
<dbReference type="SUPFAM" id="SSF103473">
    <property type="entry name" value="MFS general substrate transporter"/>
    <property type="match status" value="1"/>
</dbReference>
<dbReference type="PROSITE" id="PS50850">
    <property type="entry name" value="MFS"/>
    <property type="match status" value="1"/>
</dbReference>
<dbReference type="PROSITE" id="PS00216">
    <property type="entry name" value="SUGAR_TRANSPORT_1"/>
    <property type="match status" value="1"/>
</dbReference>
<evidence type="ECO:0000250" key="1">
    <source>
        <dbReference type="UniProtKB" id="O70594"/>
    </source>
</evidence>
<evidence type="ECO:0000250" key="2">
    <source>
        <dbReference type="UniProtKB" id="O76082"/>
    </source>
</evidence>
<evidence type="ECO:0000255" key="3"/>
<evidence type="ECO:0000269" key="4">
    <source>
    </source>
</evidence>
<evidence type="ECO:0000269" key="5">
    <source>
    </source>
</evidence>
<evidence type="ECO:0000269" key="6">
    <source>
    </source>
</evidence>
<evidence type="ECO:0000269" key="7">
    <source>
    </source>
</evidence>
<evidence type="ECO:0000269" key="8">
    <source>
    </source>
</evidence>
<evidence type="ECO:0000303" key="9">
    <source>
    </source>
</evidence>
<evidence type="ECO:0000303" key="10">
    <source>
    </source>
</evidence>
<evidence type="ECO:0000305" key="11"/>
<evidence type="ECO:0000312" key="12">
    <source>
        <dbReference type="MGI" id="MGI:1329012"/>
    </source>
</evidence>
<evidence type="ECO:0007744" key="13">
    <source>
    </source>
</evidence>
<evidence type="ECO:0007744" key="14">
    <source>
    </source>
</evidence>
<keyword id="KW-0067">ATP-binding</keyword>
<keyword id="KW-1003">Cell membrane</keyword>
<keyword id="KW-0225">Disease variant</keyword>
<keyword id="KW-0325">Glycoprotein</keyword>
<keyword id="KW-0406">Ion transport</keyword>
<keyword id="KW-0472">Membrane</keyword>
<keyword id="KW-0547">Nucleotide-binding</keyword>
<keyword id="KW-0597">Phosphoprotein</keyword>
<keyword id="KW-1185">Reference proteome</keyword>
<keyword id="KW-0915">Sodium</keyword>
<keyword id="KW-0739">Sodium transport</keyword>
<keyword id="KW-0769">Symport</keyword>
<keyword id="KW-0812">Transmembrane</keyword>
<keyword id="KW-1133">Transmembrane helix</keyword>
<keyword id="KW-0813">Transport</keyword>